<keyword id="KW-0576">Peroxisome</keyword>
<keyword id="KW-1185">Reference proteome</keyword>
<keyword id="KW-0808">Transferase</keyword>
<keyword id="KW-0809">Transit peptide</keyword>
<keyword id="KW-0816">Tricarboxylic acid cycle</keyword>
<sequence length="509" mass="56175">MEISERVRARLAVLSGHLSEGKQDSPAIERWCTSADTSVAPLGSLKGTLTIVDERTGKNYKVPVSDDGTVKAVDFKKIVTGKEDKGLKLYDPGYLNTAPVRSSISYIDGDEGILRYRGYPIEEMAENSTFLEVAYLLMYGNLPSESQLSDWEFAVSQHSAVPQGVLDIIQSMPHDAHPMGVLVSAMSALSIFHPDANPALRGQDIYDSKQVRDKQIIRIIGKAPTIAAAAYLRMAGRPPVLPSGNLPYADNFLYMLDSLGNRSYKPNPRLARVLDILFILHAEHEMNCSTAAARHLASSGVDVYTAVAGAVGALYGPLHGGANEAVLKMLSEIGTVENIPEFIEGVKNRKRKMSGFGHRVYKNYDPRAKVIKNLADEVFSIVGKDPLIEVAVALEKAALSDDYFVKRKLYPNVDFYSGLIYRAMGFPPEFFTVLFAIPRMAGYLSHWKESLDDPDTKIMRPQQVYTGVWLRHYTPVRERIVTDDSKESDKLGQVATSNASRRRLAGSSV</sequence>
<reference key="1">
    <citation type="journal article" date="1999" name="Nature">
        <title>Sequence and analysis of chromosome 2 of the plant Arabidopsis thaliana.</title>
        <authorList>
            <person name="Lin X."/>
            <person name="Kaul S."/>
            <person name="Rounsley S.D."/>
            <person name="Shea T.P."/>
            <person name="Benito M.-I."/>
            <person name="Town C.D."/>
            <person name="Fujii C.Y."/>
            <person name="Mason T.M."/>
            <person name="Bowman C.L."/>
            <person name="Barnstead M.E."/>
            <person name="Feldblyum T.V."/>
            <person name="Buell C.R."/>
            <person name="Ketchum K.A."/>
            <person name="Lee J.J."/>
            <person name="Ronning C.M."/>
            <person name="Koo H.L."/>
            <person name="Moffat K.S."/>
            <person name="Cronin L.A."/>
            <person name="Shen M."/>
            <person name="Pai G."/>
            <person name="Van Aken S."/>
            <person name="Umayam L."/>
            <person name="Tallon L.J."/>
            <person name="Gill J.E."/>
            <person name="Adams M.D."/>
            <person name="Carrera A.J."/>
            <person name="Creasy T.H."/>
            <person name="Goodman H.M."/>
            <person name="Somerville C.R."/>
            <person name="Copenhaver G.P."/>
            <person name="Preuss D."/>
            <person name="Nierman W.C."/>
            <person name="White O."/>
            <person name="Eisen J.A."/>
            <person name="Salzberg S.L."/>
            <person name="Fraser C.M."/>
            <person name="Venter J.C."/>
        </authorList>
    </citation>
    <scope>NUCLEOTIDE SEQUENCE [LARGE SCALE GENOMIC DNA]</scope>
    <source>
        <strain>cv. Columbia</strain>
    </source>
</reference>
<reference key="2">
    <citation type="journal article" date="2017" name="Plant J.">
        <title>Araport11: a complete reannotation of the Arabidopsis thaliana reference genome.</title>
        <authorList>
            <person name="Cheng C.Y."/>
            <person name="Krishnakumar V."/>
            <person name="Chan A.P."/>
            <person name="Thibaud-Nissen F."/>
            <person name="Schobel S."/>
            <person name="Town C.D."/>
        </authorList>
    </citation>
    <scope>GENOME REANNOTATION</scope>
    <source>
        <strain>cv. Columbia</strain>
    </source>
</reference>
<reference key="3">
    <citation type="journal article" date="2003" name="Science">
        <title>Empirical analysis of transcriptional activity in the Arabidopsis genome.</title>
        <authorList>
            <person name="Yamada K."/>
            <person name="Lim J."/>
            <person name="Dale J.M."/>
            <person name="Chen H."/>
            <person name="Shinn P."/>
            <person name="Palm C.J."/>
            <person name="Southwick A.M."/>
            <person name="Wu H.C."/>
            <person name="Kim C.J."/>
            <person name="Nguyen M."/>
            <person name="Pham P.K."/>
            <person name="Cheuk R.F."/>
            <person name="Karlin-Newmann G."/>
            <person name="Liu S.X."/>
            <person name="Lam B."/>
            <person name="Sakano H."/>
            <person name="Wu T."/>
            <person name="Yu G."/>
            <person name="Miranda M."/>
            <person name="Quach H.L."/>
            <person name="Tripp M."/>
            <person name="Chang C.H."/>
            <person name="Lee J.M."/>
            <person name="Toriumi M.J."/>
            <person name="Chan M.M."/>
            <person name="Tang C.C."/>
            <person name="Onodera C.S."/>
            <person name="Deng J.M."/>
            <person name="Akiyama K."/>
            <person name="Ansari Y."/>
            <person name="Arakawa T."/>
            <person name="Banh J."/>
            <person name="Banno F."/>
            <person name="Bowser L."/>
            <person name="Brooks S.Y."/>
            <person name="Carninci P."/>
            <person name="Chao Q."/>
            <person name="Choy N."/>
            <person name="Enju A."/>
            <person name="Goldsmith A.D."/>
            <person name="Gurjal M."/>
            <person name="Hansen N.F."/>
            <person name="Hayashizaki Y."/>
            <person name="Johnson-Hopson C."/>
            <person name="Hsuan V.W."/>
            <person name="Iida K."/>
            <person name="Karnes M."/>
            <person name="Khan S."/>
            <person name="Koesema E."/>
            <person name="Ishida J."/>
            <person name="Jiang P.X."/>
            <person name="Jones T."/>
            <person name="Kawai J."/>
            <person name="Kamiya A."/>
            <person name="Meyers C."/>
            <person name="Nakajima M."/>
            <person name="Narusaka M."/>
            <person name="Seki M."/>
            <person name="Sakurai T."/>
            <person name="Satou M."/>
            <person name="Tamse R."/>
            <person name="Vaysberg M."/>
            <person name="Wallender E.K."/>
            <person name="Wong C."/>
            <person name="Yamamura Y."/>
            <person name="Yuan S."/>
            <person name="Shinozaki K."/>
            <person name="Davis R.W."/>
            <person name="Theologis A."/>
            <person name="Ecker J.R."/>
        </authorList>
    </citation>
    <scope>NUCLEOTIDE SEQUENCE [LARGE SCALE MRNA]</scope>
    <source>
        <strain>cv. Columbia</strain>
    </source>
</reference>
<reference key="4">
    <citation type="submission" date="2004-09" db="EMBL/GenBank/DDBJ databases">
        <title>Large-scale analysis of RIKEN Arabidopsis full-length (RAFL) cDNAs.</title>
        <authorList>
            <person name="Totoki Y."/>
            <person name="Seki M."/>
            <person name="Ishida J."/>
            <person name="Nakajima M."/>
            <person name="Enju A."/>
            <person name="Kamiya A."/>
            <person name="Narusaka M."/>
            <person name="Shin-i T."/>
            <person name="Nakagawa M."/>
            <person name="Sakamoto N."/>
            <person name="Oishi K."/>
            <person name="Kohara Y."/>
            <person name="Kobayashi M."/>
            <person name="Toyoda A."/>
            <person name="Sakaki Y."/>
            <person name="Sakurai T."/>
            <person name="Iida K."/>
            <person name="Akiyama K."/>
            <person name="Satou M."/>
            <person name="Toyoda T."/>
            <person name="Konagaya A."/>
            <person name="Carninci P."/>
            <person name="Kawai J."/>
            <person name="Hayashizaki Y."/>
            <person name="Shinozaki K."/>
        </authorList>
    </citation>
    <scope>NUCLEOTIDE SEQUENCE [LARGE SCALE MRNA] OF 369-509</scope>
    <source>
        <strain>cv. Columbia</strain>
    </source>
</reference>
<reference key="5">
    <citation type="journal article" date="2005" name="Plant Cell">
        <title>Arabidopsis peroxisomal citrate synthase is required for fatty acid respiration and seed germination.</title>
        <authorList>
            <person name="Pracharoenwattana I."/>
            <person name="Cornah J.E."/>
            <person name="Smith S.M."/>
        </authorList>
    </citation>
    <scope>FUNCTION</scope>
    <scope>SUBCELLULAR LOCATION</scope>
    <scope>TISSUE SPECIFICITY</scope>
    <scope>DEVELOPMENTAL STAGE</scope>
</reference>
<feature type="transit peptide" description="Peroxisome" evidence="1">
    <location>
        <begin position="1"/>
        <end status="unknown"/>
    </location>
</feature>
<feature type="chain" id="PRO_0000005483" description="Citrate synthase 3, peroxisomal">
    <location>
        <begin status="unknown"/>
        <end position="509"/>
    </location>
</feature>
<feature type="region of interest" description="Disordered" evidence="3">
    <location>
        <begin position="485"/>
        <end position="509"/>
    </location>
</feature>
<feature type="compositionally biased region" description="Basic residues" evidence="3">
    <location>
        <begin position="500"/>
        <end position="509"/>
    </location>
</feature>
<feature type="active site" evidence="2">
    <location>
        <position position="319"/>
    </location>
</feature>
<feature type="active site" evidence="2">
    <location>
        <position position="358"/>
    </location>
</feature>
<feature type="active site" evidence="2">
    <location>
        <position position="414"/>
    </location>
</feature>
<feature type="sequence conflict" description="In Ref. 4; BAD93930." evidence="5" ref="4">
    <original>F</original>
    <variation>L</variation>
    <location>
        <position position="430"/>
    </location>
</feature>
<evidence type="ECO:0000255" key="1"/>
<evidence type="ECO:0000255" key="2">
    <source>
        <dbReference type="PROSITE-ProRule" id="PRU10117"/>
    </source>
</evidence>
<evidence type="ECO:0000256" key="3">
    <source>
        <dbReference type="SAM" id="MobiDB-lite"/>
    </source>
</evidence>
<evidence type="ECO:0000269" key="4">
    <source>
    </source>
</evidence>
<evidence type="ECO:0000305" key="5"/>
<proteinExistence type="evidence at transcript level"/>
<dbReference type="EC" id="2.3.3.16"/>
<dbReference type="EMBL" id="AC006931">
    <property type="protein sequence ID" value="AAD21729.1"/>
    <property type="molecule type" value="Genomic_DNA"/>
</dbReference>
<dbReference type="EMBL" id="CP002685">
    <property type="protein sequence ID" value="AEC10169.1"/>
    <property type="molecule type" value="Genomic_DNA"/>
</dbReference>
<dbReference type="EMBL" id="AY048214">
    <property type="protein sequence ID" value="AAK82477.1"/>
    <property type="molecule type" value="mRNA"/>
</dbReference>
<dbReference type="EMBL" id="AY124841">
    <property type="protein sequence ID" value="AAM70550.1"/>
    <property type="molecule type" value="mRNA"/>
</dbReference>
<dbReference type="EMBL" id="AK221264">
    <property type="protein sequence ID" value="BAD93930.1"/>
    <property type="molecule type" value="mRNA"/>
</dbReference>
<dbReference type="PIR" id="C84858">
    <property type="entry name" value="C84858"/>
</dbReference>
<dbReference type="RefSeq" id="NP_181807.1">
    <property type="nucleotide sequence ID" value="NM_129840.5"/>
</dbReference>
<dbReference type="SMR" id="Q9SJH7"/>
<dbReference type="BioGRID" id="4216">
    <property type="interactions" value="33"/>
</dbReference>
<dbReference type="FunCoup" id="Q9SJH7">
    <property type="interactions" value="946"/>
</dbReference>
<dbReference type="IntAct" id="Q9SJH7">
    <property type="interactions" value="18"/>
</dbReference>
<dbReference type="STRING" id="3702.Q9SJH7"/>
<dbReference type="PaxDb" id="3702-AT2G42790.1"/>
<dbReference type="ProteomicsDB" id="246864"/>
<dbReference type="EnsemblPlants" id="AT2G42790.1">
    <property type="protein sequence ID" value="AT2G42790.1"/>
    <property type="gene ID" value="AT2G42790"/>
</dbReference>
<dbReference type="GeneID" id="818879"/>
<dbReference type="Gramene" id="AT2G42790.1">
    <property type="protein sequence ID" value="AT2G42790.1"/>
    <property type="gene ID" value="AT2G42790"/>
</dbReference>
<dbReference type="KEGG" id="ath:AT2G42790"/>
<dbReference type="Araport" id="AT2G42790"/>
<dbReference type="TAIR" id="AT2G42790">
    <property type="gene designation" value="CSY3"/>
</dbReference>
<dbReference type="eggNOG" id="KOG2617">
    <property type="taxonomic scope" value="Eukaryota"/>
</dbReference>
<dbReference type="HOGENOM" id="CLU_025068_0_1_1"/>
<dbReference type="InParanoid" id="Q9SJH7"/>
<dbReference type="OMA" id="WVAHWNE"/>
<dbReference type="OrthoDB" id="435022at2759"/>
<dbReference type="PhylomeDB" id="Q9SJH7"/>
<dbReference type="BioCyc" id="ARA:AT2G42790-MONOMER"/>
<dbReference type="UniPathway" id="UPA00223">
    <property type="reaction ID" value="UER00717"/>
</dbReference>
<dbReference type="PRO" id="PR:Q9SJH7"/>
<dbReference type="Proteomes" id="UP000006548">
    <property type="component" value="Chromosome 2"/>
</dbReference>
<dbReference type="ExpressionAtlas" id="Q9SJH7">
    <property type="expression patterns" value="baseline and differential"/>
</dbReference>
<dbReference type="GO" id="GO:0005829">
    <property type="term" value="C:cytosol"/>
    <property type="evidence" value="ECO:0007005"/>
    <property type="project" value="TAIR"/>
</dbReference>
<dbReference type="GO" id="GO:0005777">
    <property type="term" value="C:peroxisome"/>
    <property type="evidence" value="ECO:0000314"/>
    <property type="project" value="TAIR"/>
</dbReference>
<dbReference type="GO" id="GO:0004108">
    <property type="term" value="F:citrate (Si)-synthase activity"/>
    <property type="evidence" value="ECO:0000316"/>
    <property type="project" value="TAIR"/>
</dbReference>
<dbReference type="GO" id="GO:0006635">
    <property type="term" value="P:fatty acid beta-oxidation"/>
    <property type="evidence" value="ECO:0000316"/>
    <property type="project" value="TAIR"/>
</dbReference>
<dbReference type="GO" id="GO:0006099">
    <property type="term" value="P:tricarboxylic acid cycle"/>
    <property type="evidence" value="ECO:0007669"/>
    <property type="project" value="UniProtKB-UniPathway"/>
</dbReference>
<dbReference type="CDD" id="cd06115">
    <property type="entry name" value="AthCS_per_like"/>
    <property type="match status" value="1"/>
</dbReference>
<dbReference type="FunFam" id="1.10.230.10:FF:000002">
    <property type="entry name" value="Citrate synthase"/>
    <property type="match status" value="1"/>
</dbReference>
<dbReference type="FunFam" id="1.10.580.10:FF:000005">
    <property type="entry name" value="Citrate synthase"/>
    <property type="match status" value="1"/>
</dbReference>
<dbReference type="Gene3D" id="1.10.580.10">
    <property type="entry name" value="Citrate Synthase, domain 1"/>
    <property type="match status" value="1"/>
</dbReference>
<dbReference type="Gene3D" id="1.10.230.10">
    <property type="entry name" value="Cytochrome P450-Terp, domain 2"/>
    <property type="match status" value="1"/>
</dbReference>
<dbReference type="InterPro" id="IPR016142">
    <property type="entry name" value="Citrate_synth-like_lrg_a-sub"/>
</dbReference>
<dbReference type="InterPro" id="IPR016143">
    <property type="entry name" value="Citrate_synth-like_sm_a-sub"/>
</dbReference>
<dbReference type="InterPro" id="IPR002020">
    <property type="entry name" value="Citrate_synthase"/>
</dbReference>
<dbReference type="InterPro" id="IPR019810">
    <property type="entry name" value="Citrate_synthase_AS"/>
</dbReference>
<dbReference type="InterPro" id="IPR036969">
    <property type="entry name" value="Citrate_synthase_sf"/>
</dbReference>
<dbReference type="PANTHER" id="PTHR11739">
    <property type="entry name" value="CITRATE SYNTHASE"/>
    <property type="match status" value="1"/>
</dbReference>
<dbReference type="PANTHER" id="PTHR11739:SF4">
    <property type="entry name" value="CITRATE SYNTHASE, PEROXISOMAL"/>
    <property type="match status" value="1"/>
</dbReference>
<dbReference type="Pfam" id="PF00285">
    <property type="entry name" value="Citrate_synt"/>
    <property type="match status" value="1"/>
</dbReference>
<dbReference type="PRINTS" id="PR00143">
    <property type="entry name" value="CITRTSNTHASE"/>
</dbReference>
<dbReference type="SUPFAM" id="SSF48256">
    <property type="entry name" value="Citrate synthase"/>
    <property type="match status" value="1"/>
</dbReference>
<dbReference type="PROSITE" id="PS00480">
    <property type="entry name" value="CITRATE_SYNTHASE"/>
    <property type="match status" value="1"/>
</dbReference>
<name>CISY3_ARATH</name>
<organism>
    <name type="scientific">Arabidopsis thaliana</name>
    <name type="common">Mouse-ear cress</name>
    <dbReference type="NCBI Taxonomy" id="3702"/>
    <lineage>
        <taxon>Eukaryota</taxon>
        <taxon>Viridiplantae</taxon>
        <taxon>Streptophyta</taxon>
        <taxon>Embryophyta</taxon>
        <taxon>Tracheophyta</taxon>
        <taxon>Spermatophyta</taxon>
        <taxon>Magnoliopsida</taxon>
        <taxon>eudicotyledons</taxon>
        <taxon>Gunneridae</taxon>
        <taxon>Pentapetalae</taxon>
        <taxon>rosids</taxon>
        <taxon>malvids</taxon>
        <taxon>Brassicales</taxon>
        <taxon>Brassicaceae</taxon>
        <taxon>Camelineae</taxon>
        <taxon>Arabidopsis</taxon>
    </lineage>
</organism>
<comment type="function">
    <text evidence="4">Peroxisomal citrate synthase required for the fatty acid respiration in seedlings, citrate being exported from peroxisomes into mitochondria during respiration of triacylglycerol (TAG). Indeed, complete respiration requires the transfer of carbon in the form of citrate from the peroxisome to the mitochondria.</text>
</comment>
<comment type="catalytic activity">
    <reaction evidence="2">
        <text>oxaloacetate + acetyl-CoA + H2O = citrate + CoA + H(+)</text>
        <dbReference type="Rhea" id="RHEA:16845"/>
        <dbReference type="ChEBI" id="CHEBI:15377"/>
        <dbReference type="ChEBI" id="CHEBI:15378"/>
        <dbReference type="ChEBI" id="CHEBI:16452"/>
        <dbReference type="ChEBI" id="CHEBI:16947"/>
        <dbReference type="ChEBI" id="CHEBI:57287"/>
        <dbReference type="ChEBI" id="CHEBI:57288"/>
        <dbReference type="EC" id="2.3.3.16"/>
    </reaction>
</comment>
<comment type="pathway">
    <text>Carbohydrate metabolism; tricarboxylic acid cycle; isocitrate from oxaloacetate: step 1/2.</text>
</comment>
<comment type="subcellular location">
    <subcellularLocation>
        <location evidence="4">Peroxisome</location>
    </subcellularLocation>
</comment>
<comment type="tissue specificity">
    <text evidence="4">Widely expressed. Expressed throughout the shoot. Expressed in flower, silique, stem, cauline leaf, young leaf, mature leaf and senescent leaf.</text>
</comment>
<comment type="developmental stage">
    <text evidence="4">Expressed throughout seedling growth.</text>
</comment>
<comment type="miscellaneous">
    <text>Citrate synthase is found in nearly all cells capable of oxidative metabolism.</text>
</comment>
<comment type="similarity">
    <text evidence="5">Belongs to the citrate synthase family.</text>
</comment>
<accession>Q9SJH7</accession>
<accession>Q56YQ7</accession>
<protein>
    <recommendedName>
        <fullName>Citrate synthase 3, peroxisomal</fullName>
        <ecNumber>2.3.3.16</ecNumber>
    </recommendedName>
</protein>
<gene>
    <name type="primary">CSY3</name>
    <name type="ordered locus">At2g42790</name>
    <name type="ORF">F7D19.21</name>
</gene>